<accession>O06052</accession>
<proteinExistence type="inferred from homology"/>
<gene>
    <name type="primary">fbpA</name>
</gene>
<sequence>MKLVDRFRGAVTGMPRRLMVGAVGAALLSGLVGFVGGSATASAFSRPGLPVEYLQVPSAAMGRNIKIQFQSGGANSPALYLLDGMRAQDDYNGWDINTPAFEWYNQSGISVVMPVGGQSSFYSDWYNPACGKAGCTTYKWETFLTSELPAYLASNKQVKPTGSAAVGLSMAGSSALILAAYHPDQFVYAGSLSALLDPSQAMGPSLIGLAMGDAGGYKASDMWGPRGPAWQRNDPSLQVGKLVANNSRLWIYCGDGKPSDLGGNNLPAKFLEGFVRTSNLKFQEAYNGAGGHNAVFNFDANGTHDWPYWGAPVQAMKGDLQSTLGATPGAGPATAAASA</sequence>
<dbReference type="EC" id="2.3.1.122"/>
<dbReference type="EC" id="2.3.1.20"/>
<dbReference type="EMBL" id="Y10378">
    <property type="protein sequence ID" value="CAA71406.1"/>
    <property type="molecule type" value="Genomic_DNA"/>
</dbReference>
<dbReference type="SMR" id="O06052"/>
<dbReference type="STRING" id="1778.A9W97_06290"/>
<dbReference type="ESTHER" id="mycgo-a85a">
    <property type="family name" value="A85-Mycolyl-transferase"/>
</dbReference>
<dbReference type="GO" id="GO:0005737">
    <property type="term" value="C:cytoplasm"/>
    <property type="evidence" value="ECO:0007669"/>
    <property type="project" value="UniProtKB-SubCell"/>
</dbReference>
<dbReference type="GO" id="GO:0005576">
    <property type="term" value="C:extracellular region"/>
    <property type="evidence" value="ECO:0007669"/>
    <property type="project" value="UniProtKB-KW"/>
</dbReference>
<dbReference type="GO" id="GO:0004144">
    <property type="term" value="F:diacylglycerol O-acyltransferase activity"/>
    <property type="evidence" value="ECO:0007669"/>
    <property type="project" value="UniProtKB-EC"/>
</dbReference>
<dbReference type="GO" id="GO:0050348">
    <property type="term" value="F:trehalose O-mycolyltransferase activity"/>
    <property type="evidence" value="ECO:0007669"/>
    <property type="project" value="UniProtKB-EC"/>
</dbReference>
<dbReference type="FunFam" id="3.40.50.1820:FF:000086">
    <property type="entry name" value="Diacylglycerol acyltransferase/mycolyltransferase Ag85C"/>
    <property type="match status" value="1"/>
</dbReference>
<dbReference type="Gene3D" id="3.40.50.1820">
    <property type="entry name" value="alpha/beta hydrolase"/>
    <property type="match status" value="1"/>
</dbReference>
<dbReference type="InterPro" id="IPR029058">
    <property type="entry name" value="AB_hydrolase_fold"/>
</dbReference>
<dbReference type="InterPro" id="IPR000801">
    <property type="entry name" value="Esterase-like"/>
</dbReference>
<dbReference type="InterPro" id="IPR050583">
    <property type="entry name" value="Mycobacterial_A85_antigen"/>
</dbReference>
<dbReference type="PANTHER" id="PTHR48098:SF1">
    <property type="entry name" value="DIACYLGLYCEROL ACYLTRANSFERASE_MYCOLYLTRANSFERASE AG85A"/>
    <property type="match status" value="1"/>
</dbReference>
<dbReference type="PANTHER" id="PTHR48098">
    <property type="entry name" value="ENTEROCHELIN ESTERASE-RELATED"/>
    <property type="match status" value="1"/>
</dbReference>
<dbReference type="Pfam" id="PF00756">
    <property type="entry name" value="Esterase"/>
    <property type="match status" value="1"/>
</dbReference>
<dbReference type="SUPFAM" id="SSF53474">
    <property type="entry name" value="alpha/beta-Hydrolases"/>
    <property type="match status" value="1"/>
</dbReference>
<keyword id="KW-0012">Acyltransferase</keyword>
<keyword id="KW-0134">Cell wall</keyword>
<keyword id="KW-0963">Cytoplasm</keyword>
<keyword id="KW-1015">Disulfide bond</keyword>
<keyword id="KW-0964">Secreted</keyword>
<keyword id="KW-0732">Signal</keyword>
<keyword id="KW-0808">Transferase</keyword>
<feature type="signal peptide" evidence="2">
    <location>
        <begin position="1"/>
        <end position="43"/>
    </location>
</feature>
<feature type="chain" id="PRO_0000000212" description="Diacylglycerol acyltransferase/mycolyltransferase Ag85A">
    <location>
        <begin position="44"/>
        <end position="339"/>
    </location>
</feature>
<feature type="region of interest" description="Fibronectin-binding">
    <location>
        <begin position="101"/>
        <end position="111"/>
    </location>
</feature>
<feature type="active site" description="Nucleophile" evidence="1">
    <location>
        <position position="169"/>
    </location>
</feature>
<feature type="active site" evidence="1">
    <location>
        <position position="272"/>
    </location>
</feature>
<feature type="active site" evidence="1">
    <location>
        <position position="304"/>
    </location>
</feature>
<feature type="binding site" evidence="1">
    <location>
        <begin position="85"/>
        <end position="86"/>
    </location>
    <ligand>
        <name>substrate</name>
    </ligand>
</feature>
<feature type="binding site" evidence="1">
    <location>
        <position position="169"/>
    </location>
    <ligand>
        <name>substrate</name>
    </ligand>
</feature>
<feature type="binding site" evidence="1">
    <location>
        <position position="197"/>
    </location>
    <ligand>
        <name>substrate</name>
    </ligand>
</feature>
<feature type="binding site" evidence="1">
    <location>
        <begin position="274"/>
        <end position="277"/>
    </location>
    <ligand>
        <name>substrate</name>
    </ligand>
</feature>
<feature type="binding site" evidence="1">
    <location>
        <position position="281"/>
    </location>
    <ligand>
        <name>substrate</name>
    </ligand>
</feature>
<feature type="binding site" evidence="1">
    <location>
        <begin position="304"/>
        <end position="306"/>
    </location>
    <ligand>
        <name>substrate</name>
    </ligand>
</feature>
<feature type="disulfide bond" evidence="1">
    <location>
        <begin position="130"/>
        <end position="135"/>
    </location>
</feature>
<organism>
    <name type="scientific">Mycobacterium gordonae</name>
    <dbReference type="NCBI Taxonomy" id="1778"/>
    <lineage>
        <taxon>Bacteria</taxon>
        <taxon>Bacillati</taxon>
        <taxon>Actinomycetota</taxon>
        <taxon>Actinomycetes</taxon>
        <taxon>Mycobacteriales</taxon>
        <taxon>Mycobacteriaceae</taxon>
        <taxon>Mycobacterium</taxon>
    </lineage>
</organism>
<reference key="1">
    <citation type="journal article" date="1997" name="Mol. Cell. Probes">
        <title>Cloning of the antigen 85A from Mycobacterium gordonae and its use for the specific PCR identification of these mycobacteria.</title>
        <authorList>
            <person name="Dumonceaux M."/>
            <person name="Fauville Dufaux M."/>
            <person name="Ooms J."/>
            <person name="De Wit L."/>
            <person name="Sonck P."/>
            <person name="Content J."/>
        </authorList>
    </citation>
    <scope>NUCLEOTIDE SEQUENCE [GENOMIC DNA]</scope>
    <source>
        <strain>ATCC 14470 / DSM 44160 / JCM 6382 / NCTC 10267 / TMC 1324</strain>
    </source>
</reference>
<name>A85A_MYCGO</name>
<protein>
    <recommendedName>
        <fullName>Diacylglycerol acyltransferase/mycolyltransferase Ag85A</fullName>
        <shortName>DGAT</shortName>
        <ecNumber>2.3.1.122</ecNumber>
        <ecNumber>2.3.1.20</ecNumber>
    </recommendedName>
    <alternativeName>
        <fullName>Acyl-CoA:diacylglycerol acyltransferase</fullName>
    </alternativeName>
    <alternativeName>
        <fullName>Antigen 85 complex A</fullName>
        <shortName>85A</shortName>
        <shortName>Ag85A</shortName>
    </alternativeName>
    <alternativeName>
        <fullName>Fibronectin-binding protein A</fullName>
        <shortName>Fbps A</shortName>
    </alternativeName>
</protein>
<evidence type="ECO:0000250" key="1"/>
<evidence type="ECO:0000255" key="2"/>
<evidence type="ECO:0000305" key="3"/>
<comment type="function">
    <text evidence="1">The antigen 85 proteins (FbpA, FbpB, FbpC) are responsible for the high affinity of mycobacteria for fibronectin, a large adhesive glycoprotein, which facilitates the attachment of M.tuberculosis to murine alveolar macrophages (AMs). They also help to maintain the integrity of the cell wall by catalyzing the transfer of mycolic acids to cell wall arabinogalactan, and through the synthesis of alpha,alpha-trehalose dimycolate (TDM, cord factor). They catalyze the transfer of a mycoloyl residue from one molecule of alpha,alpha-trehalose monomycolate (TMM) to another TMM, leading to the formation of TDM. FbpA mediates triacylglycerol (TAG) formation with long-chain acyl-CoA as the acyl donor and 1,2-dipalmitoyl-sn-glycerol (1,2-dipalmitin) as the acyl acceptor. It has a preference for C26:0-CoA over C18:1-CoA (By similarity).</text>
</comment>
<comment type="catalytic activity">
    <reaction>
        <text>an acyl-CoA + a 1,2-diacyl-sn-glycerol = a triacyl-sn-glycerol + CoA</text>
        <dbReference type="Rhea" id="RHEA:10868"/>
        <dbReference type="ChEBI" id="CHEBI:17815"/>
        <dbReference type="ChEBI" id="CHEBI:57287"/>
        <dbReference type="ChEBI" id="CHEBI:58342"/>
        <dbReference type="ChEBI" id="CHEBI:64615"/>
        <dbReference type="EC" id="2.3.1.20"/>
    </reaction>
</comment>
<comment type="catalytic activity">
    <reaction>
        <text>2 alpha,alpha'-trehalose 6-mycolate = alpha,alpha'-trehalose 6,6'-bismycolate + alpha,alpha-trehalose</text>
        <dbReference type="Rhea" id="RHEA:23472"/>
        <dbReference type="ChEBI" id="CHEBI:16551"/>
        <dbReference type="ChEBI" id="CHEBI:18195"/>
        <dbReference type="ChEBI" id="CHEBI:18234"/>
        <dbReference type="EC" id="2.3.1.122"/>
    </reaction>
</comment>
<comment type="subunit">
    <text evidence="1">Homodimer.</text>
</comment>
<comment type="subcellular location">
    <subcellularLocation>
        <location>Secreted</location>
        <location>Cell wall</location>
    </subcellularLocation>
    <subcellularLocation>
        <location>Cytoplasm</location>
    </subcellularLocation>
</comment>
<comment type="similarity">
    <text evidence="3">Belongs to the mycobacterial A85 antigen family.</text>
</comment>